<organism>
    <name type="scientific">Methanoregula boonei (strain DSM 21154 / JCM 14090 / 6A8)</name>
    <dbReference type="NCBI Taxonomy" id="456442"/>
    <lineage>
        <taxon>Archaea</taxon>
        <taxon>Methanobacteriati</taxon>
        <taxon>Methanobacteriota</taxon>
        <taxon>Stenosarchaea group</taxon>
        <taxon>Methanomicrobia</taxon>
        <taxon>Methanomicrobiales</taxon>
        <taxon>Methanoregulaceae</taxon>
        <taxon>Methanoregula</taxon>
    </lineage>
</organism>
<evidence type="ECO:0000255" key="1">
    <source>
        <dbReference type="HAMAP-Rule" id="MF_01371"/>
    </source>
</evidence>
<evidence type="ECO:0000305" key="2"/>
<name>RL30_METB6</name>
<feature type="chain" id="PRO_0000347168" description="Large ribosomal subunit protein uL30">
    <location>
        <begin position="1"/>
        <end position="154"/>
    </location>
</feature>
<accession>A7I5R0</accession>
<sequence>MYAVVQVRGVVNTRKDIKDTLKMLRLHHINHCVLVADTPENLGMIRKVKDYVAYGEVDAATLETILKTRGRVIGDDPLTDEYIKSNSSTYSSIVEFAQALAKGESRLRDIPGLKPVLRLHPPRKGYKTTKRTFVQGGALGYYGPEINTLLYKMR</sequence>
<protein>
    <recommendedName>
        <fullName evidence="1">Large ribosomal subunit protein uL30</fullName>
    </recommendedName>
    <alternativeName>
        <fullName evidence="2">50S ribosomal protein L30</fullName>
    </alternativeName>
</protein>
<dbReference type="EMBL" id="CP000780">
    <property type="protein sequence ID" value="ABS55071.1"/>
    <property type="molecule type" value="Genomic_DNA"/>
</dbReference>
<dbReference type="RefSeq" id="WP_012106092.1">
    <property type="nucleotide sequence ID" value="NC_009712.1"/>
</dbReference>
<dbReference type="SMR" id="A7I5R0"/>
<dbReference type="STRING" id="456442.Mboo_0553"/>
<dbReference type="GeneID" id="5411175"/>
<dbReference type="KEGG" id="mbn:Mboo_0553"/>
<dbReference type="eggNOG" id="arCOG04086">
    <property type="taxonomic scope" value="Archaea"/>
</dbReference>
<dbReference type="HOGENOM" id="CLU_055156_6_0_2"/>
<dbReference type="OrthoDB" id="6379at2157"/>
<dbReference type="Proteomes" id="UP000002408">
    <property type="component" value="Chromosome"/>
</dbReference>
<dbReference type="GO" id="GO:0022625">
    <property type="term" value="C:cytosolic large ribosomal subunit"/>
    <property type="evidence" value="ECO:0007669"/>
    <property type="project" value="TreeGrafter"/>
</dbReference>
<dbReference type="GO" id="GO:0003723">
    <property type="term" value="F:RNA binding"/>
    <property type="evidence" value="ECO:0007669"/>
    <property type="project" value="TreeGrafter"/>
</dbReference>
<dbReference type="GO" id="GO:0003735">
    <property type="term" value="F:structural constituent of ribosome"/>
    <property type="evidence" value="ECO:0007669"/>
    <property type="project" value="InterPro"/>
</dbReference>
<dbReference type="GO" id="GO:0000463">
    <property type="term" value="P:maturation of LSU-rRNA from tricistronic rRNA transcript (SSU-rRNA, 5.8S rRNA, LSU-rRNA)"/>
    <property type="evidence" value="ECO:0007669"/>
    <property type="project" value="TreeGrafter"/>
</dbReference>
<dbReference type="GO" id="GO:0006412">
    <property type="term" value="P:translation"/>
    <property type="evidence" value="ECO:0007669"/>
    <property type="project" value="UniProtKB-UniRule"/>
</dbReference>
<dbReference type="CDD" id="cd01657">
    <property type="entry name" value="Ribosomal_L7_archeal_euk"/>
    <property type="match status" value="1"/>
</dbReference>
<dbReference type="Gene3D" id="1.10.15.30">
    <property type="match status" value="1"/>
</dbReference>
<dbReference type="Gene3D" id="3.30.1390.20">
    <property type="entry name" value="Ribosomal protein L30, ferredoxin-like fold domain"/>
    <property type="match status" value="1"/>
</dbReference>
<dbReference type="HAMAP" id="MF_01371_A">
    <property type="entry name" value="Ribosomal_uL30_A"/>
    <property type="match status" value="1"/>
</dbReference>
<dbReference type="InterPro" id="IPR036919">
    <property type="entry name" value="Ribo_uL30_ferredoxin-like_sf"/>
</dbReference>
<dbReference type="InterPro" id="IPR039699">
    <property type="entry name" value="Ribosomal_uL30"/>
</dbReference>
<dbReference type="InterPro" id="IPR005997">
    <property type="entry name" value="Ribosomal_uL30_arc"/>
</dbReference>
<dbReference type="InterPro" id="IPR018038">
    <property type="entry name" value="Ribosomal_uL30_CS"/>
</dbReference>
<dbReference type="InterPro" id="IPR035808">
    <property type="entry name" value="Ribosomal_uL30_euk_arc"/>
</dbReference>
<dbReference type="InterPro" id="IPR016082">
    <property type="entry name" value="Ribosomal_uL30_ferredoxin-like"/>
</dbReference>
<dbReference type="NCBIfam" id="NF004711">
    <property type="entry name" value="PRK06049.1"/>
    <property type="match status" value="1"/>
</dbReference>
<dbReference type="NCBIfam" id="TIGR01309">
    <property type="entry name" value="uL30_arch"/>
    <property type="match status" value="1"/>
</dbReference>
<dbReference type="PANTHER" id="PTHR11524">
    <property type="entry name" value="60S RIBOSOMAL PROTEIN L7"/>
    <property type="match status" value="1"/>
</dbReference>
<dbReference type="PANTHER" id="PTHR11524:SF16">
    <property type="entry name" value="LARGE RIBOSOMAL SUBUNIT PROTEIN UL30"/>
    <property type="match status" value="1"/>
</dbReference>
<dbReference type="Pfam" id="PF00327">
    <property type="entry name" value="Ribosomal_L30"/>
    <property type="match status" value="1"/>
</dbReference>
<dbReference type="SUPFAM" id="SSF55129">
    <property type="entry name" value="Ribosomal protein L30p/L7e"/>
    <property type="match status" value="1"/>
</dbReference>
<dbReference type="PROSITE" id="PS00634">
    <property type="entry name" value="RIBOSOMAL_L30"/>
    <property type="match status" value="1"/>
</dbReference>
<gene>
    <name evidence="1" type="primary">rpl30</name>
    <name type="ordered locus">Mboo_0553</name>
</gene>
<reference key="1">
    <citation type="journal article" date="2015" name="Microbiology">
        <title>Genome of Methanoregula boonei 6A8 reveals adaptations to oligotrophic peatland environments.</title>
        <authorList>
            <person name="Braeuer S."/>
            <person name="Cadillo-Quiroz H."/>
            <person name="Kyrpides N."/>
            <person name="Woyke T."/>
            <person name="Goodwin L."/>
            <person name="Detter C."/>
            <person name="Podell S."/>
            <person name="Yavitt J.B."/>
            <person name="Zinder S.H."/>
        </authorList>
    </citation>
    <scope>NUCLEOTIDE SEQUENCE [LARGE SCALE GENOMIC DNA]</scope>
    <source>
        <strain>DSM 21154 / JCM 14090 / 6A8</strain>
    </source>
</reference>
<keyword id="KW-1185">Reference proteome</keyword>
<keyword id="KW-0687">Ribonucleoprotein</keyword>
<keyword id="KW-0689">Ribosomal protein</keyword>
<proteinExistence type="inferred from homology"/>
<comment type="subunit">
    <text evidence="1">Part of the 50S ribosomal subunit.</text>
</comment>
<comment type="similarity">
    <text evidence="1">Belongs to the universal ribosomal protein uL30 family.</text>
</comment>